<evidence type="ECO:0000255" key="1">
    <source>
        <dbReference type="HAMAP-Rule" id="MF_00417"/>
    </source>
</evidence>
<protein>
    <recommendedName>
        <fullName evidence="1">Pyrrolidone-carboxylate peptidase</fullName>
        <ecNumber evidence="1">3.4.19.3</ecNumber>
    </recommendedName>
    <alternativeName>
        <fullName evidence="1">5-oxoprolyl-peptidase</fullName>
    </alternativeName>
    <alternativeName>
        <fullName evidence="1">Pyroglutamyl-peptidase I</fullName>
        <shortName evidence="1">PGP-I</shortName>
        <shortName evidence="1">Pyrase</shortName>
    </alternativeName>
</protein>
<organism>
    <name type="scientific">Alkaliphilus oremlandii (strain OhILAs)</name>
    <name type="common">Clostridium oremlandii (strain OhILAs)</name>
    <dbReference type="NCBI Taxonomy" id="350688"/>
    <lineage>
        <taxon>Bacteria</taxon>
        <taxon>Bacillati</taxon>
        <taxon>Bacillota</taxon>
        <taxon>Clostridia</taxon>
        <taxon>Peptostreptococcales</taxon>
        <taxon>Natronincolaceae</taxon>
        <taxon>Alkaliphilus</taxon>
    </lineage>
</organism>
<keyword id="KW-0963">Cytoplasm</keyword>
<keyword id="KW-0378">Hydrolase</keyword>
<keyword id="KW-0645">Protease</keyword>
<keyword id="KW-1185">Reference proteome</keyword>
<keyword id="KW-0788">Thiol protease</keyword>
<feature type="chain" id="PRO_1000060079" description="Pyrrolidone-carboxylate peptidase">
    <location>
        <begin position="1"/>
        <end position="213"/>
    </location>
</feature>
<feature type="active site" evidence="1">
    <location>
        <position position="78"/>
    </location>
</feature>
<feature type="active site" evidence="1">
    <location>
        <position position="141"/>
    </location>
</feature>
<feature type="active site" evidence="1">
    <location>
        <position position="165"/>
    </location>
</feature>
<proteinExistence type="inferred from homology"/>
<dbReference type="EC" id="3.4.19.3" evidence="1"/>
<dbReference type="EMBL" id="CP000853">
    <property type="protein sequence ID" value="ABW19891.1"/>
    <property type="molecule type" value="Genomic_DNA"/>
</dbReference>
<dbReference type="RefSeq" id="WP_012160198.1">
    <property type="nucleotide sequence ID" value="NC_009922.1"/>
</dbReference>
<dbReference type="SMR" id="A8MJA9"/>
<dbReference type="STRING" id="350688.Clos_2359"/>
<dbReference type="MEROPS" id="C15.001"/>
<dbReference type="KEGG" id="aoe:Clos_2359"/>
<dbReference type="eggNOG" id="COG2039">
    <property type="taxonomic scope" value="Bacteria"/>
</dbReference>
<dbReference type="HOGENOM" id="CLU_043960_4_0_9"/>
<dbReference type="OrthoDB" id="9779738at2"/>
<dbReference type="Proteomes" id="UP000000269">
    <property type="component" value="Chromosome"/>
</dbReference>
<dbReference type="GO" id="GO:0005829">
    <property type="term" value="C:cytosol"/>
    <property type="evidence" value="ECO:0007669"/>
    <property type="project" value="InterPro"/>
</dbReference>
<dbReference type="GO" id="GO:0016920">
    <property type="term" value="F:pyroglutamyl-peptidase activity"/>
    <property type="evidence" value="ECO:0007669"/>
    <property type="project" value="UniProtKB-UniRule"/>
</dbReference>
<dbReference type="GO" id="GO:0006508">
    <property type="term" value="P:proteolysis"/>
    <property type="evidence" value="ECO:0007669"/>
    <property type="project" value="UniProtKB-KW"/>
</dbReference>
<dbReference type="CDD" id="cd00501">
    <property type="entry name" value="Peptidase_C15"/>
    <property type="match status" value="1"/>
</dbReference>
<dbReference type="FunFam" id="3.40.630.20:FF:000001">
    <property type="entry name" value="Pyrrolidone-carboxylate peptidase"/>
    <property type="match status" value="1"/>
</dbReference>
<dbReference type="Gene3D" id="3.40.630.20">
    <property type="entry name" value="Peptidase C15, pyroglutamyl peptidase I-like"/>
    <property type="match status" value="1"/>
</dbReference>
<dbReference type="HAMAP" id="MF_00417">
    <property type="entry name" value="Pyrrolid_peptidase"/>
    <property type="match status" value="1"/>
</dbReference>
<dbReference type="InterPro" id="IPR000816">
    <property type="entry name" value="Peptidase_C15"/>
</dbReference>
<dbReference type="InterPro" id="IPR016125">
    <property type="entry name" value="Peptidase_C15-like"/>
</dbReference>
<dbReference type="InterPro" id="IPR036440">
    <property type="entry name" value="Peptidase_C15-like_sf"/>
</dbReference>
<dbReference type="InterPro" id="IPR029762">
    <property type="entry name" value="PGP-I_bact-type"/>
</dbReference>
<dbReference type="InterPro" id="IPR033694">
    <property type="entry name" value="PGPEP1_Cys_AS"/>
</dbReference>
<dbReference type="InterPro" id="IPR033693">
    <property type="entry name" value="PGPEP1_Glu_AS"/>
</dbReference>
<dbReference type="NCBIfam" id="NF009676">
    <property type="entry name" value="PRK13197.1"/>
    <property type="match status" value="1"/>
</dbReference>
<dbReference type="NCBIfam" id="TIGR00504">
    <property type="entry name" value="pyro_pdase"/>
    <property type="match status" value="1"/>
</dbReference>
<dbReference type="PANTHER" id="PTHR23402">
    <property type="entry name" value="PROTEASE FAMILY C15 PYROGLUTAMYL-PEPTIDASE I-RELATED"/>
    <property type="match status" value="1"/>
</dbReference>
<dbReference type="PANTHER" id="PTHR23402:SF1">
    <property type="entry name" value="PYROGLUTAMYL-PEPTIDASE I"/>
    <property type="match status" value="1"/>
</dbReference>
<dbReference type="Pfam" id="PF01470">
    <property type="entry name" value="Peptidase_C15"/>
    <property type="match status" value="1"/>
</dbReference>
<dbReference type="PIRSF" id="PIRSF015592">
    <property type="entry name" value="Prld-crbxl_pptds"/>
    <property type="match status" value="1"/>
</dbReference>
<dbReference type="PRINTS" id="PR00706">
    <property type="entry name" value="PYROGLUPTASE"/>
</dbReference>
<dbReference type="SUPFAM" id="SSF53182">
    <property type="entry name" value="Pyrrolidone carboxyl peptidase (pyroglutamate aminopeptidase)"/>
    <property type="match status" value="1"/>
</dbReference>
<dbReference type="PROSITE" id="PS01334">
    <property type="entry name" value="PYRASE_CYS"/>
    <property type="match status" value="1"/>
</dbReference>
<dbReference type="PROSITE" id="PS01333">
    <property type="entry name" value="PYRASE_GLU"/>
    <property type="match status" value="1"/>
</dbReference>
<accession>A8MJA9</accession>
<reference key="1">
    <citation type="submission" date="2007-10" db="EMBL/GenBank/DDBJ databases">
        <title>Complete genome of Alkaliphilus oremlandii OhILAs.</title>
        <authorList>
            <person name="Copeland A."/>
            <person name="Lucas S."/>
            <person name="Lapidus A."/>
            <person name="Barry K."/>
            <person name="Detter J.C."/>
            <person name="Glavina del Rio T."/>
            <person name="Hammon N."/>
            <person name="Israni S."/>
            <person name="Dalin E."/>
            <person name="Tice H."/>
            <person name="Pitluck S."/>
            <person name="Chain P."/>
            <person name="Malfatti S."/>
            <person name="Shin M."/>
            <person name="Vergez L."/>
            <person name="Schmutz J."/>
            <person name="Larimer F."/>
            <person name="Land M."/>
            <person name="Hauser L."/>
            <person name="Kyrpides N."/>
            <person name="Mikhailova N."/>
            <person name="Stolz J.F."/>
            <person name="Dawson A."/>
            <person name="Fisher E."/>
            <person name="Crable B."/>
            <person name="Perera E."/>
            <person name="Lisak J."/>
            <person name="Ranganathan M."/>
            <person name="Basu P."/>
            <person name="Richardson P."/>
        </authorList>
    </citation>
    <scope>NUCLEOTIDE SEQUENCE [LARGE SCALE GENOMIC DNA]</scope>
    <source>
        <strain>OhILAs</strain>
    </source>
</reference>
<sequence length="213" mass="23103">MKILVTGFDPFGGAHINPATEAIKLLPQQINGAEIITIQIPTVFRKSIDVLFRAIKKESPDMVICIGQAGGRYDITVERVAINVDDARIEDNEGNLPIDSPIFEDGAPAYFSDLPIKAMVQAMQAANIPASISNTAGTFVCNHLMYAALHYASQYQPDMKVGFIHIPYLVEQVVGKANTPSMNIQDIVRGLTVAIHAAIENKRDIKVQGGAIC</sequence>
<name>PCP_ALKOO</name>
<comment type="function">
    <text evidence="1">Removes 5-oxoproline from various penultimate amino acid residues except L-proline.</text>
</comment>
<comment type="catalytic activity">
    <reaction evidence="1">
        <text>Release of an N-terminal pyroglutamyl group from a polypeptide, the second amino acid generally not being Pro.</text>
        <dbReference type="EC" id="3.4.19.3"/>
    </reaction>
</comment>
<comment type="subunit">
    <text evidence="1">Homotetramer.</text>
</comment>
<comment type="subcellular location">
    <subcellularLocation>
        <location evidence="1">Cytoplasm</location>
    </subcellularLocation>
</comment>
<comment type="similarity">
    <text evidence="1">Belongs to the peptidase C15 family.</text>
</comment>
<gene>
    <name evidence="1" type="primary">pcp</name>
    <name type="ordered locus">Clos_2359</name>
</gene>